<protein>
    <recommendedName>
        <fullName evidence="1">Translational regulator CsrA</fullName>
    </recommendedName>
    <alternativeName>
        <fullName evidence="1">Carbon storage regulator</fullName>
    </alternativeName>
</protein>
<accession>Q3JCK6</accession>
<evidence type="ECO:0000255" key="1">
    <source>
        <dbReference type="HAMAP-Rule" id="MF_00167"/>
    </source>
</evidence>
<dbReference type="EMBL" id="CP000127">
    <property type="protein sequence ID" value="ABA57440.1"/>
    <property type="molecule type" value="Genomic_DNA"/>
</dbReference>
<dbReference type="RefSeq" id="WP_002809243.1">
    <property type="nucleotide sequence ID" value="NC_007484.1"/>
</dbReference>
<dbReference type="SMR" id="Q3JCK6"/>
<dbReference type="FunCoup" id="Q3JCK6">
    <property type="interactions" value="209"/>
</dbReference>
<dbReference type="STRING" id="323261.Noc_0928"/>
<dbReference type="KEGG" id="noc:Noc_0928"/>
<dbReference type="eggNOG" id="COG1551">
    <property type="taxonomic scope" value="Bacteria"/>
</dbReference>
<dbReference type="HOGENOM" id="CLU_164837_2_1_6"/>
<dbReference type="InParanoid" id="Q3JCK6"/>
<dbReference type="Proteomes" id="UP000006838">
    <property type="component" value="Chromosome"/>
</dbReference>
<dbReference type="GO" id="GO:0005829">
    <property type="term" value="C:cytosol"/>
    <property type="evidence" value="ECO:0007669"/>
    <property type="project" value="TreeGrafter"/>
</dbReference>
<dbReference type="GO" id="GO:0048027">
    <property type="term" value="F:mRNA 5'-UTR binding"/>
    <property type="evidence" value="ECO:0007669"/>
    <property type="project" value="UniProtKB-UniRule"/>
</dbReference>
<dbReference type="GO" id="GO:0006402">
    <property type="term" value="P:mRNA catabolic process"/>
    <property type="evidence" value="ECO:0007669"/>
    <property type="project" value="InterPro"/>
</dbReference>
<dbReference type="GO" id="GO:0045947">
    <property type="term" value="P:negative regulation of translational initiation"/>
    <property type="evidence" value="ECO:0007669"/>
    <property type="project" value="UniProtKB-UniRule"/>
</dbReference>
<dbReference type="GO" id="GO:0045948">
    <property type="term" value="P:positive regulation of translational initiation"/>
    <property type="evidence" value="ECO:0007669"/>
    <property type="project" value="UniProtKB-UniRule"/>
</dbReference>
<dbReference type="GO" id="GO:0006109">
    <property type="term" value="P:regulation of carbohydrate metabolic process"/>
    <property type="evidence" value="ECO:0007669"/>
    <property type="project" value="UniProtKB-UniRule"/>
</dbReference>
<dbReference type="FunFam" id="2.60.40.4380:FF:000001">
    <property type="entry name" value="Translational regulator CsrA"/>
    <property type="match status" value="1"/>
</dbReference>
<dbReference type="Gene3D" id="2.60.40.4380">
    <property type="entry name" value="Translational regulator CsrA"/>
    <property type="match status" value="1"/>
</dbReference>
<dbReference type="HAMAP" id="MF_00167">
    <property type="entry name" value="CsrA"/>
    <property type="match status" value="1"/>
</dbReference>
<dbReference type="InterPro" id="IPR003751">
    <property type="entry name" value="CsrA"/>
</dbReference>
<dbReference type="InterPro" id="IPR036107">
    <property type="entry name" value="CsrA_sf"/>
</dbReference>
<dbReference type="NCBIfam" id="TIGR00202">
    <property type="entry name" value="csrA"/>
    <property type="match status" value="1"/>
</dbReference>
<dbReference type="NCBIfam" id="NF002469">
    <property type="entry name" value="PRK01712.1"/>
    <property type="match status" value="1"/>
</dbReference>
<dbReference type="PANTHER" id="PTHR34984">
    <property type="entry name" value="CARBON STORAGE REGULATOR"/>
    <property type="match status" value="1"/>
</dbReference>
<dbReference type="PANTHER" id="PTHR34984:SF1">
    <property type="entry name" value="CARBON STORAGE REGULATOR"/>
    <property type="match status" value="1"/>
</dbReference>
<dbReference type="Pfam" id="PF02599">
    <property type="entry name" value="CsrA"/>
    <property type="match status" value="1"/>
</dbReference>
<dbReference type="SUPFAM" id="SSF117130">
    <property type="entry name" value="CsrA-like"/>
    <property type="match status" value="1"/>
</dbReference>
<keyword id="KW-0010">Activator</keyword>
<keyword id="KW-0963">Cytoplasm</keyword>
<keyword id="KW-1185">Reference proteome</keyword>
<keyword id="KW-0678">Repressor</keyword>
<keyword id="KW-0694">RNA-binding</keyword>
<keyword id="KW-0810">Translation regulation</keyword>
<comment type="function">
    <text evidence="1">A key translational regulator that binds mRNA to regulate translation initiation and/or mRNA stability. Mediates global changes in gene expression, shifting from rapid growth to stress survival by linking envelope stress, the stringent response and the catabolite repression systems. Usually binds in the 5'-UTR; binding at or near the Shine-Dalgarno sequence prevents ribosome-binding, repressing translation, binding elsewhere in the 5'-UTR can activate translation and/or stabilize the mRNA. Its function is antagonized by small RNA(s).</text>
</comment>
<comment type="subunit">
    <text evidence="1">Homodimer; the beta-strands of each monomer intercalate to form a hydrophobic core, while the alpha-helices form wings that extend away from the core.</text>
</comment>
<comment type="subcellular location">
    <subcellularLocation>
        <location evidence="1">Cytoplasm</location>
    </subcellularLocation>
</comment>
<comment type="similarity">
    <text evidence="1">Belongs to the CsrA/RsmA family.</text>
</comment>
<reference key="1">
    <citation type="journal article" date="2006" name="Appl. Environ. Microbiol.">
        <title>Complete genome sequence of the marine, chemolithoautotrophic, ammonia-oxidizing bacterium Nitrosococcus oceani ATCC 19707.</title>
        <authorList>
            <person name="Klotz M.G."/>
            <person name="Arp D.J."/>
            <person name="Chain P.S.G."/>
            <person name="El-Sheikh A.F."/>
            <person name="Hauser L.J."/>
            <person name="Hommes N.G."/>
            <person name="Larimer F.W."/>
            <person name="Malfatti S.A."/>
            <person name="Norton J.M."/>
            <person name="Poret-Peterson A.T."/>
            <person name="Vergez L.M."/>
            <person name="Ward B.B."/>
        </authorList>
    </citation>
    <scope>NUCLEOTIDE SEQUENCE [LARGE SCALE GENOMIC DNA]</scope>
    <source>
        <strain>ATCC 19707 / BCRC 17464 / JCM 30415 / NCIMB 11848 / C-107</strain>
    </source>
</reference>
<name>CSRA_NITOC</name>
<gene>
    <name evidence="1" type="primary">csrA</name>
    <name type="ordered locus">Noc_0928</name>
</gene>
<feature type="chain" id="PRO_1000023402" description="Translational regulator CsrA">
    <location>
        <begin position="1"/>
        <end position="85"/>
    </location>
</feature>
<organism>
    <name type="scientific">Nitrosococcus oceani (strain ATCC 19707 / BCRC 17464 / JCM 30415 / NCIMB 11848 / C-107)</name>
    <dbReference type="NCBI Taxonomy" id="323261"/>
    <lineage>
        <taxon>Bacteria</taxon>
        <taxon>Pseudomonadati</taxon>
        <taxon>Pseudomonadota</taxon>
        <taxon>Gammaproteobacteria</taxon>
        <taxon>Chromatiales</taxon>
        <taxon>Chromatiaceae</taxon>
        <taxon>Nitrosococcus</taxon>
    </lineage>
</organism>
<sequence length="85" mass="9268">MLILTRRVGEALMIGDQVTVTVLGVKGNQVRIGVTAPKEVTVHREEIYARIQREKEQANGRGQVSESEFTEEAFRAAPAISGSGE</sequence>
<proteinExistence type="inferred from homology"/>